<comment type="function">
    <text evidence="1">Part of ribonuclease P, a protein complex that generates mature tRNA molecules by cleaving their 5'-ends.</text>
</comment>
<comment type="catalytic activity">
    <reaction evidence="1">
        <text>Endonucleolytic cleavage of RNA, removing 5'-extranucleotides from tRNA precursor.</text>
        <dbReference type="EC" id="3.1.26.5"/>
    </reaction>
</comment>
<comment type="subunit">
    <text evidence="1">Consists of a catalytic RNA component and at least 4-5 protein subunits.</text>
</comment>
<comment type="subcellular location">
    <subcellularLocation>
        <location evidence="1">Cytoplasm</location>
    </subcellularLocation>
</comment>
<comment type="similarity">
    <text evidence="1">Belongs to the eukaryotic/archaeal RNase P protein component 1 family.</text>
</comment>
<name>RNP1_HALS3</name>
<protein>
    <recommendedName>
        <fullName evidence="1">Ribonuclease P protein component 1</fullName>
        <shortName evidence="1">RNase P component 1</shortName>
        <ecNumber evidence="1">3.1.26.5</ecNumber>
    </recommendedName>
    <alternativeName>
        <fullName evidence="1">Rpp29</fullName>
    </alternativeName>
</protein>
<dbReference type="EC" id="3.1.26.5" evidence="1"/>
<dbReference type="EMBL" id="AM774415">
    <property type="protein sequence ID" value="CAP14233.1"/>
    <property type="molecule type" value="Genomic_DNA"/>
</dbReference>
<dbReference type="RefSeq" id="WP_010903242.1">
    <property type="nucleotide sequence ID" value="NC_010364.1"/>
</dbReference>
<dbReference type="SMR" id="B0R664"/>
<dbReference type="EnsemblBacteria" id="CAP14233">
    <property type="protein sequence ID" value="CAP14233"/>
    <property type="gene ID" value="OE_3398F"/>
</dbReference>
<dbReference type="KEGG" id="hsl:OE_3398F"/>
<dbReference type="HOGENOM" id="CLU_107020_0_0_2"/>
<dbReference type="PhylomeDB" id="B0R664"/>
<dbReference type="Proteomes" id="UP000001321">
    <property type="component" value="Chromosome"/>
</dbReference>
<dbReference type="GO" id="GO:0005737">
    <property type="term" value="C:cytoplasm"/>
    <property type="evidence" value="ECO:0007669"/>
    <property type="project" value="UniProtKB-SubCell"/>
</dbReference>
<dbReference type="GO" id="GO:0030677">
    <property type="term" value="C:ribonuclease P complex"/>
    <property type="evidence" value="ECO:0007669"/>
    <property type="project" value="UniProtKB-UniRule"/>
</dbReference>
<dbReference type="GO" id="GO:0004526">
    <property type="term" value="F:ribonuclease P activity"/>
    <property type="evidence" value="ECO:0007669"/>
    <property type="project" value="UniProtKB-UniRule"/>
</dbReference>
<dbReference type="GO" id="GO:0003723">
    <property type="term" value="F:RNA binding"/>
    <property type="evidence" value="ECO:0007669"/>
    <property type="project" value="InterPro"/>
</dbReference>
<dbReference type="GO" id="GO:0001682">
    <property type="term" value="P:tRNA 5'-leader removal"/>
    <property type="evidence" value="ECO:0007669"/>
    <property type="project" value="UniProtKB-UniRule"/>
</dbReference>
<dbReference type="Gene3D" id="2.30.30.210">
    <property type="entry name" value="Ribonuclease P/MRP, subunit p29"/>
    <property type="match status" value="1"/>
</dbReference>
<dbReference type="HAMAP" id="MF_00754">
    <property type="entry name" value="RNase_P_1"/>
    <property type="match status" value="1"/>
</dbReference>
<dbReference type="InterPro" id="IPR036980">
    <property type="entry name" value="RNase_P/MRP_Rpp29_sf"/>
</dbReference>
<dbReference type="InterPro" id="IPR023538">
    <property type="entry name" value="RNP1"/>
</dbReference>
<dbReference type="InterPro" id="IPR023534">
    <property type="entry name" value="Rof/RNase_P-like"/>
</dbReference>
<dbReference type="InterPro" id="IPR002730">
    <property type="entry name" value="Rpp29/RNP1"/>
</dbReference>
<dbReference type="Pfam" id="PF01868">
    <property type="entry name" value="RNase_P-MRP_p29"/>
    <property type="match status" value="1"/>
</dbReference>
<dbReference type="SMART" id="SM00538">
    <property type="entry name" value="POP4"/>
    <property type="match status" value="1"/>
</dbReference>
<dbReference type="SUPFAM" id="SSF101744">
    <property type="entry name" value="Rof/RNase P subunit-like"/>
    <property type="match status" value="1"/>
</dbReference>
<sequence>MTTITPESLPRHELLGLHARVAADTDQSRVGIAGRVVDETMQTVVLRTASGVAQVPKKGATFEFRLTDEAAAPDNGVGTAFKPAGGETRQTTGESVAYVTVDGGRLLSRPERRSENGVDSKWR</sequence>
<proteinExistence type="inferred from homology"/>
<gene>
    <name evidence="1" type="primary">rnp1</name>
    <name type="ordered locus">OE_3398F</name>
</gene>
<organism>
    <name type="scientific">Halobacterium salinarum (strain ATCC 29341 / DSM 671 / R1)</name>
    <dbReference type="NCBI Taxonomy" id="478009"/>
    <lineage>
        <taxon>Archaea</taxon>
        <taxon>Methanobacteriati</taxon>
        <taxon>Methanobacteriota</taxon>
        <taxon>Stenosarchaea group</taxon>
        <taxon>Halobacteria</taxon>
        <taxon>Halobacteriales</taxon>
        <taxon>Halobacteriaceae</taxon>
        <taxon>Halobacterium</taxon>
        <taxon>Halobacterium salinarum NRC-34001</taxon>
    </lineage>
</organism>
<evidence type="ECO:0000255" key="1">
    <source>
        <dbReference type="HAMAP-Rule" id="MF_00754"/>
    </source>
</evidence>
<evidence type="ECO:0000256" key="2">
    <source>
        <dbReference type="SAM" id="MobiDB-lite"/>
    </source>
</evidence>
<reference key="1">
    <citation type="journal article" date="2008" name="Genomics">
        <title>Evolution in the laboratory: the genome of Halobacterium salinarum strain R1 compared to that of strain NRC-1.</title>
        <authorList>
            <person name="Pfeiffer F."/>
            <person name="Schuster S.C."/>
            <person name="Broicher A."/>
            <person name="Falb M."/>
            <person name="Palm P."/>
            <person name="Rodewald K."/>
            <person name="Ruepp A."/>
            <person name="Soppa J."/>
            <person name="Tittor J."/>
            <person name="Oesterhelt D."/>
        </authorList>
    </citation>
    <scope>NUCLEOTIDE SEQUENCE [LARGE SCALE GENOMIC DNA]</scope>
    <source>
        <strain>ATCC 29341 / DSM 671 / R1</strain>
    </source>
</reference>
<feature type="chain" id="PRO_1000194585" description="Ribonuclease P protein component 1">
    <location>
        <begin position="1"/>
        <end position="123"/>
    </location>
</feature>
<feature type="region of interest" description="Disordered" evidence="2">
    <location>
        <begin position="73"/>
        <end position="93"/>
    </location>
</feature>
<keyword id="KW-0963">Cytoplasm</keyword>
<keyword id="KW-0255">Endonuclease</keyword>
<keyword id="KW-0378">Hydrolase</keyword>
<keyword id="KW-0540">Nuclease</keyword>
<keyword id="KW-0819">tRNA processing</keyword>
<accession>B0R664</accession>